<comment type="function">
    <text evidence="1">Bidirectionally degrades single-stranded DNA into large acid-insoluble oligonucleotides, which are then degraded further into small acid-soluble oligonucleotides.</text>
</comment>
<comment type="catalytic activity">
    <reaction evidence="1">
        <text>Exonucleolytic cleavage in either 5'- to 3'- or 3'- to 5'-direction to yield nucleoside 5'-phosphates.</text>
        <dbReference type="EC" id="3.1.11.6"/>
    </reaction>
</comment>
<comment type="subunit">
    <text evidence="1">Heterooligomer composed of large and small subunits.</text>
</comment>
<comment type="subcellular location">
    <subcellularLocation>
        <location evidence="1">Cytoplasm</location>
    </subcellularLocation>
</comment>
<comment type="similarity">
    <text evidence="1">Belongs to the XseB family.</text>
</comment>
<feature type="chain" id="PRO_0000226300" description="Exodeoxyribonuclease 7 small subunit">
    <location>
        <begin position="1"/>
        <end position="139"/>
    </location>
</feature>
<feature type="region of interest" description="Disordered" evidence="2">
    <location>
        <begin position="1"/>
        <end position="26"/>
    </location>
</feature>
<feature type="region of interest" description="Disordered" evidence="2">
    <location>
        <begin position="82"/>
        <end position="139"/>
    </location>
</feature>
<feature type="compositionally biased region" description="Acidic residues" evidence="2">
    <location>
        <begin position="130"/>
        <end position="139"/>
    </location>
</feature>
<organism>
    <name type="scientific">Rhodopirellula baltica (strain DSM 10527 / NCIMB 13988 / SH1)</name>
    <dbReference type="NCBI Taxonomy" id="243090"/>
    <lineage>
        <taxon>Bacteria</taxon>
        <taxon>Pseudomonadati</taxon>
        <taxon>Planctomycetota</taxon>
        <taxon>Planctomycetia</taxon>
        <taxon>Pirellulales</taxon>
        <taxon>Pirellulaceae</taxon>
        <taxon>Rhodopirellula</taxon>
    </lineage>
</organism>
<proteinExistence type="inferred from homology"/>
<dbReference type="EC" id="3.1.11.6" evidence="1"/>
<dbReference type="EMBL" id="BX294136">
    <property type="protein sequence ID" value="CAD72451.1"/>
    <property type="molecule type" value="Genomic_DNA"/>
</dbReference>
<dbReference type="RefSeq" id="NP_864767.1">
    <property type="nucleotide sequence ID" value="NC_005027.1"/>
</dbReference>
<dbReference type="RefSeq" id="WP_007333124.1">
    <property type="nucleotide sequence ID" value="NC_005027.1"/>
</dbReference>
<dbReference type="SMR" id="Q7UWB5"/>
<dbReference type="STRING" id="243090.RB2146"/>
<dbReference type="EnsemblBacteria" id="CAD72451">
    <property type="protein sequence ID" value="CAD72451"/>
    <property type="gene ID" value="RB2146"/>
</dbReference>
<dbReference type="KEGG" id="rba:RB2146"/>
<dbReference type="PATRIC" id="fig|243090.15.peg.981"/>
<dbReference type="eggNOG" id="COG1722">
    <property type="taxonomic scope" value="Bacteria"/>
</dbReference>
<dbReference type="HOGENOM" id="CLU_1843539_0_0_0"/>
<dbReference type="InParanoid" id="Q7UWB5"/>
<dbReference type="OrthoDB" id="284990at2"/>
<dbReference type="Proteomes" id="UP000001025">
    <property type="component" value="Chromosome"/>
</dbReference>
<dbReference type="GO" id="GO:0005829">
    <property type="term" value="C:cytosol"/>
    <property type="evidence" value="ECO:0000318"/>
    <property type="project" value="GO_Central"/>
</dbReference>
<dbReference type="GO" id="GO:0009318">
    <property type="term" value="C:exodeoxyribonuclease VII complex"/>
    <property type="evidence" value="ECO:0007669"/>
    <property type="project" value="InterPro"/>
</dbReference>
<dbReference type="GO" id="GO:0008855">
    <property type="term" value="F:exodeoxyribonuclease VII activity"/>
    <property type="evidence" value="ECO:0000318"/>
    <property type="project" value="GO_Central"/>
</dbReference>
<dbReference type="GO" id="GO:0006308">
    <property type="term" value="P:DNA catabolic process"/>
    <property type="evidence" value="ECO:0007669"/>
    <property type="project" value="UniProtKB-UniRule"/>
</dbReference>
<dbReference type="FunFam" id="1.10.287.1040:FF:000015">
    <property type="entry name" value="Exodeoxyribonuclease 7 small subunit"/>
    <property type="match status" value="1"/>
</dbReference>
<dbReference type="Gene3D" id="1.10.287.1040">
    <property type="entry name" value="Exonuclease VII, small subunit"/>
    <property type="match status" value="1"/>
</dbReference>
<dbReference type="HAMAP" id="MF_00337">
    <property type="entry name" value="Exonuc_7_S"/>
    <property type="match status" value="1"/>
</dbReference>
<dbReference type="InterPro" id="IPR003761">
    <property type="entry name" value="Exonuc_VII_S"/>
</dbReference>
<dbReference type="InterPro" id="IPR037004">
    <property type="entry name" value="Exonuc_VII_ssu_sf"/>
</dbReference>
<dbReference type="NCBIfam" id="TIGR01280">
    <property type="entry name" value="xseB"/>
    <property type="match status" value="1"/>
</dbReference>
<dbReference type="PANTHER" id="PTHR34137">
    <property type="entry name" value="EXODEOXYRIBONUCLEASE 7 SMALL SUBUNIT"/>
    <property type="match status" value="1"/>
</dbReference>
<dbReference type="PANTHER" id="PTHR34137:SF1">
    <property type="entry name" value="EXODEOXYRIBONUCLEASE 7 SMALL SUBUNIT"/>
    <property type="match status" value="1"/>
</dbReference>
<dbReference type="Pfam" id="PF02609">
    <property type="entry name" value="Exonuc_VII_S"/>
    <property type="match status" value="1"/>
</dbReference>
<dbReference type="SUPFAM" id="SSF116842">
    <property type="entry name" value="XseB-like"/>
    <property type="match status" value="1"/>
</dbReference>
<protein>
    <recommendedName>
        <fullName evidence="1">Exodeoxyribonuclease 7 small subunit</fullName>
        <ecNumber evidence="1">3.1.11.6</ecNumber>
    </recommendedName>
    <alternativeName>
        <fullName evidence="1">Exodeoxyribonuclease VII small subunit</fullName>
        <shortName evidence="1">Exonuclease VII small subunit</shortName>
    </alternativeName>
</protein>
<keyword id="KW-0963">Cytoplasm</keyword>
<keyword id="KW-0269">Exonuclease</keyword>
<keyword id="KW-0378">Hydrolase</keyword>
<keyword id="KW-0540">Nuclease</keyword>
<keyword id="KW-1185">Reference proteome</keyword>
<accession>Q7UWB5</accession>
<name>EX7S_RHOBA</name>
<gene>
    <name evidence="1" type="primary">xseB</name>
    <name type="ordered locus">RB2146</name>
</gene>
<evidence type="ECO:0000255" key="1">
    <source>
        <dbReference type="HAMAP-Rule" id="MF_00337"/>
    </source>
</evidence>
<evidence type="ECO:0000256" key="2">
    <source>
        <dbReference type="SAM" id="MobiDB-lite"/>
    </source>
</evidence>
<sequence>MAKKKRNPSAEEAGDGEQTAAELGDFETTLGDVETIVRKLESGALTLDDSLKQYEVAVAKMRQCYQLLDVAERKISVLAGVDAEGRPVTEPLENMSGGESLVQKQASRGKRRGAVAPDHSASDTTGVDSADLDSAEDDE</sequence>
<reference key="1">
    <citation type="journal article" date="2003" name="Proc. Natl. Acad. Sci. U.S.A.">
        <title>Complete genome sequence of the marine planctomycete Pirellula sp. strain 1.</title>
        <authorList>
            <person name="Gloeckner F.O."/>
            <person name="Kube M."/>
            <person name="Bauer M."/>
            <person name="Teeling H."/>
            <person name="Lombardot T."/>
            <person name="Ludwig W."/>
            <person name="Gade D."/>
            <person name="Beck A."/>
            <person name="Borzym K."/>
            <person name="Heitmann K."/>
            <person name="Rabus R."/>
            <person name="Schlesner H."/>
            <person name="Amann R."/>
            <person name="Reinhardt R."/>
        </authorList>
    </citation>
    <scope>NUCLEOTIDE SEQUENCE [LARGE SCALE GENOMIC DNA]</scope>
    <source>
        <strain>DSM 10527 / NCIMB 13988 / SH1</strain>
    </source>
</reference>